<evidence type="ECO:0000255" key="1">
    <source>
        <dbReference type="PROSITE-ProRule" id="PRU00026"/>
    </source>
</evidence>
<evidence type="ECO:0000255" key="2">
    <source>
        <dbReference type="PROSITE-ProRule" id="PRU01119"/>
    </source>
</evidence>
<evidence type="ECO:0000269" key="3">
    <source>
    </source>
</evidence>
<evidence type="ECO:0000305" key="4"/>
<evidence type="ECO:0007744" key="5">
    <source>
    </source>
</evidence>
<protein>
    <recommendedName>
        <fullName>Beige protein homolog 1</fullName>
    </recommendedName>
</protein>
<gene>
    <name type="primary">BPH1</name>
    <name type="ordered locus">YCR032W</name>
    <name type="ORF">YCR32W</name>
    <name type="ORF">YCR591</name>
    <name type="ORF">YCR601</name>
</gene>
<proteinExistence type="evidence at protein level"/>
<comment type="function">
    <text evidence="3">May be involved in protein sorting and cell wall formation.</text>
</comment>
<comment type="subcellular location">
    <subcellularLocation>
        <location evidence="3">Cytoplasm</location>
    </subcellularLocation>
    <subcellularLocation>
        <location evidence="3">Membrane</location>
        <topology evidence="3">Peripheral membrane protein</topology>
        <orientation evidence="3">Cytoplasmic side</orientation>
    </subcellularLocation>
</comment>
<organism>
    <name type="scientific">Saccharomyces cerevisiae (strain ATCC 204508 / S288c)</name>
    <name type="common">Baker's yeast</name>
    <dbReference type="NCBI Taxonomy" id="559292"/>
    <lineage>
        <taxon>Eukaryota</taxon>
        <taxon>Fungi</taxon>
        <taxon>Dikarya</taxon>
        <taxon>Ascomycota</taxon>
        <taxon>Saccharomycotina</taxon>
        <taxon>Saccharomycetes</taxon>
        <taxon>Saccharomycetales</taxon>
        <taxon>Saccharomycetaceae</taxon>
        <taxon>Saccharomyces</taxon>
    </lineage>
</organism>
<dbReference type="EMBL" id="X62452">
    <property type="protein sequence ID" value="CAA44309.1"/>
    <property type="molecule type" value="Genomic_DNA"/>
</dbReference>
<dbReference type="EMBL" id="X59720">
    <property type="protein sequence ID" value="CAC42982.1"/>
    <property type="molecule type" value="Genomic_DNA"/>
</dbReference>
<dbReference type="EMBL" id="X59075">
    <property type="protein sequence ID" value="CAA41798.1"/>
    <property type="molecule type" value="Genomic_DNA"/>
</dbReference>
<dbReference type="EMBL" id="S78624">
    <property type="protein sequence ID" value="AAB21258.1"/>
    <property type="molecule type" value="Genomic_DNA"/>
</dbReference>
<dbReference type="EMBL" id="BK006937">
    <property type="protein sequence ID" value="DAA07511.1"/>
    <property type="molecule type" value="Genomic_DNA"/>
</dbReference>
<dbReference type="PIR" id="S19444">
    <property type="entry name" value="S19444"/>
</dbReference>
<dbReference type="RefSeq" id="NP_009961.2">
    <property type="nucleotide sequence ID" value="NM_001178746.1"/>
</dbReference>
<dbReference type="SMR" id="P25356"/>
<dbReference type="BioGRID" id="31015">
    <property type="interactions" value="263"/>
</dbReference>
<dbReference type="FunCoup" id="P25356">
    <property type="interactions" value="30"/>
</dbReference>
<dbReference type="MINT" id="P25356"/>
<dbReference type="STRING" id="4932.YCR032W"/>
<dbReference type="iPTMnet" id="P25356"/>
<dbReference type="PaxDb" id="4932-YCR032W"/>
<dbReference type="PeptideAtlas" id="P25356"/>
<dbReference type="EnsemblFungi" id="YCR032W_mRNA">
    <property type="protein sequence ID" value="YCR032W"/>
    <property type="gene ID" value="YCR032W"/>
</dbReference>
<dbReference type="GeneID" id="850398"/>
<dbReference type="KEGG" id="sce:YCR032W"/>
<dbReference type="AGR" id="SGD:S000000628"/>
<dbReference type="SGD" id="S000000628">
    <property type="gene designation" value="BPH1"/>
</dbReference>
<dbReference type="VEuPathDB" id="FungiDB:YCR032W"/>
<dbReference type="eggNOG" id="KOG1786">
    <property type="taxonomic scope" value="Eukaryota"/>
</dbReference>
<dbReference type="HOGENOM" id="CLU_000175_3_1_1"/>
<dbReference type="InParanoid" id="P25356"/>
<dbReference type="OMA" id="RAWCSAS"/>
<dbReference type="OrthoDB" id="26681at2759"/>
<dbReference type="BioCyc" id="YEAST:G3O-29346-MONOMER"/>
<dbReference type="BioGRID-ORCS" id="850398">
    <property type="hits" value="0 hits in 10 CRISPR screens"/>
</dbReference>
<dbReference type="PRO" id="PR:P25356"/>
<dbReference type="Proteomes" id="UP000002311">
    <property type="component" value="Chromosome III"/>
</dbReference>
<dbReference type="RNAct" id="P25356">
    <property type="molecule type" value="protein"/>
</dbReference>
<dbReference type="GO" id="GO:0005829">
    <property type="term" value="C:cytosol"/>
    <property type="evidence" value="ECO:0000314"/>
    <property type="project" value="SGD"/>
</dbReference>
<dbReference type="GO" id="GO:0000329">
    <property type="term" value="C:fungal-type vacuole membrane"/>
    <property type="evidence" value="ECO:0007005"/>
    <property type="project" value="SGD"/>
</dbReference>
<dbReference type="GO" id="GO:0005770">
    <property type="term" value="C:late endosome"/>
    <property type="evidence" value="ECO:0000314"/>
    <property type="project" value="SGD"/>
</dbReference>
<dbReference type="GO" id="GO:0005739">
    <property type="term" value="C:mitochondrion"/>
    <property type="evidence" value="ECO:0007005"/>
    <property type="project" value="SGD"/>
</dbReference>
<dbReference type="GO" id="GO:0031267">
    <property type="term" value="F:small GTPase binding"/>
    <property type="evidence" value="ECO:0000314"/>
    <property type="project" value="SGD"/>
</dbReference>
<dbReference type="GO" id="GO:0006897">
    <property type="term" value="P:endocytosis"/>
    <property type="evidence" value="ECO:0000315"/>
    <property type="project" value="SGD"/>
</dbReference>
<dbReference type="GO" id="GO:0031505">
    <property type="term" value="P:fungal-type cell wall organization"/>
    <property type="evidence" value="ECO:0000315"/>
    <property type="project" value="SGD"/>
</dbReference>
<dbReference type="GO" id="GO:0006886">
    <property type="term" value="P:intracellular protein transport"/>
    <property type="evidence" value="ECO:0000315"/>
    <property type="project" value="SGD"/>
</dbReference>
<dbReference type="GO" id="GO:0009268">
    <property type="term" value="P:response to pH"/>
    <property type="evidence" value="ECO:0000315"/>
    <property type="project" value="SGD"/>
</dbReference>
<dbReference type="CDD" id="cd06071">
    <property type="entry name" value="Beach"/>
    <property type="match status" value="1"/>
</dbReference>
<dbReference type="CDD" id="cd01201">
    <property type="entry name" value="PH_BEACH"/>
    <property type="match status" value="1"/>
</dbReference>
<dbReference type="FunFam" id="1.10.1540.10:FF:000001">
    <property type="entry name" value="neurobeachin isoform X1"/>
    <property type="match status" value="1"/>
</dbReference>
<dbReference type="Gene3D" id="1.10.1540.10">
    <property type="entry name" value="BEACH domain"/>
    <property type="match status" value="1"/>
</dbReference>
<dbReference type="Gene3D" id="2.30.29.30">
    <property type="entry name" value="Pleckstrin-homology domain (PH domain)/Phosphotyrosine-binding domain (PTB)"/>
    <property type="match status" value="1"/>
</dbReference>
<dbReference type="Gene3D" id="2.130.10.10">
    <property type="entry name" value="YVTN repeat-like/Quinoprotein amine dehydrogenase"/>
    <property type="match status" value="1"/>
</dbReference>
<dbReference type="InterPro" id="IPR000409">
    <property type="entry name" value="BEACH_dom"/>
</dbReference>
<dbReference type="InterPro" id="IPR036372">
    <property type="entry name" value="BEACH_dom_sf"/>
</dbReference>
<dbReference type="InterPro" id="IPR050865">
    <property type="entry name" value="BEACH_Domain"/>
</dbReference>
<dbReference type="InterPro" id="IPR023362">
    <property type="entry name" value="PH-BEACH_dom"/>
</dbReference>
<dbReference type="InterPro" id="IPR011993">
    <property type="entry name" value="PH-like_dom_sf"/>
</dbReference>
<dbReference type="InterPro" id="IPR015943">
    <property type="entry name" value="WD40/YVTN_repeat-like_dom_sf"/>
</dbReference>
<dbReference type="InterPro" id="IPR036322">
    <property type="entry name" value="WD40_repeat_dom_sf"/>
</dbReference>
<dbReference type="PANTHER" id="PTHR13743">
    <property type="entry name" value="BEIGE/BEACH-RELATED"/>
    <property type="match status" value="1"/>
</dbReference>
<dbReference type="PANTHER" id="PTHR13743:SF123">
    <property type="entry name" value="PROTEIN FAN"/>
    <property type="match status" value="1"/>
</dbReference>
<dbReference type="Pfam" id="PF02138">
    <property type="entry name" value="Beach"/>
    <property type="match status" value="1"/>
</dbReference>
<dbReference type="Pfam" id="PF14844">
    <property type="entry name" value="PH_BEACH"/>
    <property type="match status" value="1"/>
</dbReference>
<dbReference type="SMART" id="SM01026">
    <property type="entry name" value="Beach"/>
    <property type="match status" value="1"/>
</dbReference>
<dbReference type="SUPFAM" id="SSF81837">
    <property type="entry name" value="BEACH domain"/>
    <property type="match status" value="1"/>
</dbReference>
<dbReference type="SUPFAM" id="SSF50729">
    <property type="entry name" value="PH domain-like"/>
    <property type="match status" value="1"/>
</dbReference>
<dbReference type="SUPFAM" id="SSF50978">
    <property type="entry name" value="WD40 repeat-like"/>
    <property type="match status" value="1"/>
</dbReference>
<dbReference type="PROSITE" id="PS50197">
    <property type="entry name" value="BEACH"/>
    <property type="match status" value="1"/>
</dbReference>
<dbReference type="PROSITE" id="PS51783">
    <property type="entry name" value="PH_BEACH"/>
    <property type="match status" value="1"/>
</dbReference>
<dbReference type="PROSITE" id="PS50294">
    <property type="entry name" value="WD_REPEATS_REGION"/>
    <property type="match status" value="1"/>
</dbReference>
<name>BPH1_YEAST</name>
<accession>P25356</accession>
<accession>D6VR42</accession>
<accession>Q02396</accession>
<accession>Q07348</accession>
<feature type="chain" id="PRO_0000050887" description="Beige protein homolog 1">
    <location>
        <begin position="1"/>
        <end position="2167"/>
    </location>
</feature>
<feature type="domain" description="BEACH-type PH" evidence="2">
    <location>
        <begin position="1368"/>
        <end position="1499"/>
    </location>
</feature>
<feature type="domain" description="BEACH" evidence="1">
    <location>
        <begin position="1545"/>
        <end position="1839"/>
    </location>
</feature>
<feature type="repeat" description="WD 1">
    <location>
        <begin position="1927"/>
        <end position="1965"/>
    </location>
</feature>
<feature type="repeat" description="WD 2">
    <location>
        <begin position="1976"/>
        <end position="2015"/>
    </location>
</feature>
<feature type="repeat" description="WD 3">
    <location>
        <begin position="2017"/>
        <end position="2054"/>
    </location>
</feature>
<feature type="repeat" description="WD 4">
    <location>
        <begin position="2072"/>
        <end position="2111"/>
    </location>
</feature>
<feature type="repeat" description="WD 5">
    <location>
        <begin position="2129"/>
        <end position="2167"/>
    </location>
</feature>
<feature type="cross-link" description="Glycyl lysine isopeptide (Lys-Gly) (interchain with G-Cter in ubiquitin)" evidence="5">
    <location>
        <position position="1667"/>
    </location>
</feature>
<feature type="sequence conflict" description="In Ref. 6; AAB21258." evidence="4" ref="6">
    <original>F</original>
    <variation>N</variation>
    <location>
        <position position="1893"/>
    </location>
</feature>
<sequence length="2167" mass="250872">MNSIINAASKVLRLQDDVKKATIILGDILILQPINHEVEPDVENLVQHELTKIIQGYPIQDNMIINSKKGTVEDDLCELNNYTCFALSKSFDLCHDSRNFNIAQPKRWIQLLETLTDSVSFAVIVQIILTLSNISLINKQTLGKLKKLRIRIFEILSNKNDSWKSTLLQKNLIEWYIFMLSVDCTPLELQNLYLHKELKFCNGILNSLTLQVSDPRSQNYLQFENTYKLFQIQKSSRINNSFLFYIEFNSVTSNRIMTIERHIYLEIKEGQFCISNDNYIIGLFENFEFEAGTLYFIGVLIDHNNRITLYVDGSMINQLTLFENSICQLSTCELGSMICSIKVYRFYLWDGLLTEFAINILQAIGTNYQYTFSKKKEGPEVLSLCQDFLIAKAHLMARPTTEISSTKYIDEIELLEMENIIIDVNPNDILQDFTESSNFTVKFEESTNSKNIPEVGKCYFYRSSNLVSKFVSIDSIRLAFLNMTESGSIDDLFHHVSHLMNLLRNIDILNWFKKDFGFPLFAYTLKQKITQDLSQPLNIQFFNLFLEFCGWDFNDISKSIILDTDAYENIVLNLDLWYMNEDQSSLASGGLEIIRFLFFQISSLMEASIYSKFNSNKFNDMNILEKLCLSYQAVTKRENQNSKFNELSSDLISVFVTLLKSNTDKRHLQWFLHLSYYFIKRKDVRSTEIILQAVDQLFSFYLDQGSDENAKILSEIIPLKLILMIMDQIVENNESNPITCLNILFKVVLTNKPLFKQFYKNDGLKLILTMLCKVGKSYREEIISLLLTYSIGNYTTANEIFSGAEDMIGGISNDKITAKEIIYLAVNFIEWHVINSNASDSSSVLDLNNHILRFVEDLKSLSAVPINESVFDPKKSYVMVSLLDLSIALNESEDISKFKSSSKVISELIKGNIMCALTKYAAYDFEVYMSTFFCHSTEYKLVYPKTVMNNSSYLELSFIVTLLPEILNDLVDSNNNLNLMMLKHPYTMSNLLYFLRKFRPDTSQIVMPKDFYFSSYTCLLHCVIQIDKSSFYHFKNVSKSQLLQDFKICIMNLIYSNTLKQIIWEKEEYEMFSESLMAHQEVLFAHGACDNETVGLLLIFFANRLRDCGYNKAVFNCMKVIIKNKERKLKEVACFFDPANKSEVLEGLSNILSCNNSETMNLITEQYPFFFNNTQQVRFINIVTNILFKNNNFSPISVRQIKNQVYEWKNARSEYVTQNNKKCLILFRKDNTSLDFKIKKSISRYTYNLKTDREENAVFYRNNLNLLIFHLKHTLEIQSNPNSSCKWSSDFAEDFDGMKRRLLPAWEPKYEPLINEEDANQDTITGGNRQRRESGSILSYEFIEHMETLESEPVGDLNENRKILRLLKDNDSIATIWNCSLIIGLEIKEGILIHGSNYLYFVSDYYFSLEDKKILKLSEVSQESRDMTVSLINGPDVKRVSTFLKHEVFVWKLLDITFVTKRPFLLRDVAIELLFKERVSAFFSFYNKRVRDDVLRVLNKIPKHLPADPIFSSVLQEINDRGNSIVARNGIGKASIASKFTSVFSANNSLIDGFEISKKWVRGEISNFYYLLSINILAGRSFNDLTQYPVFPWVIADYESNVLDLENPKTYRDLSKPMGAQSEKRKLQFIERYEALASLENADSAPFHYGTHYSSAMIVSSYLIRLKPFVESFLLLQGGSFGPADRLFSSLERAWSSASSENTTDVRELTPEFFFLPEFLINVNSYDFGTDQSGKKVDDVVLPPWANGDPKVFIQKNREALESPYVSAHLHEWIDLIFGYKQKGDIAVKSVNVFNRLSYPGAVNLDNIDDENERRAITGIIHNFGQTPLQIFQEPHPEKIACNVQQLTTEVWRKVPMKPIFEKTIFNLNEKNRSVDYVIHDPSYFDSLYWRGFAFPNLFFRTEESLVSLRIVHKNWLKIGLDIFKKTHMAQITSFAYWKLGEFITGDKNGLIKVWKYRKDKHSVSGNLENKKTMFGHLCELKEMRCYHDYNTLLTLDISGLVYVWDMINFELVRQITNDAQKVAISQHAGSIMVLTKNNAISIFNLNGQIYTSKKFEPAKIVSSIDFFDFTKLDAGYRKHIYWKEMEILLVGFEDGTIEIYELFLNFHNEWAIKLLKQLCTEKGKAITSIKGQGKTYLSQKRRKDTAEPHEIEVIAGTLDGRLAIWY</sequence>
<keyword id="KW-0963">Cytoplasm</keyword>
<keyword id="KW-1017">Isopeptide bond</keyword>
<keyword id="KW-0472">Membrane</keyword>
<keyword id="KW-1185">Reference proteome</keyword>
<keyword id="KW-0677">Repeat</keyword>
<keyword id="KW-0832">Ubl conjugation</keyword>
<keyword id="KW-0853">WD repeat</keyword>
<reference key="1">
    <citation type="journal article" date="1991" name="Yeast">
        <title>The sequence of 8.8 kb of yeast chromosome III cloned in lambda PM3270 contains an unusual long ORF (YCR601).</title>
        <authorList>
            <person name="Rodriguez F."/>
            <person name="Martegani E."/>
            <person name="Mauri I."/>
            <person name="Alberghina L."/>
        </authorList>
    </citation>
    <scope>NUCLEOTIDE SEQUENCE [GENOMIC DNA]</scope>
    <source>
        <strain>ATCC 204511 / S288c / AB972</strain>
    </source>
</reference>
<reference key="2">
    <citation type="journal article" date="1992" name="Nature">
        <title>The complete DNA sequence of yeast chromosome III.</title>
        <authorList>
            <person name="Oliver S.G."/>
            <person name="van der Aart Q.J.M."/>
            <person name="Agostoni-Carbone M.L."/>
            <person name="Aigle M."/>
            <person name="Alberghina L."/>
            <person name="Alexandraki D."/>
            <person name="Antoine G."/>
            <person name="Anwar R."/>
            <person name="Ballesta J.P.G."/>
            <person name="Benit P."/>
            <person name="Berben G."/>
            <person name="Bergantino E."/>
            <person name="Biteau N."/>
            <person name="Bolle P.-A."/>
            <person name="Bolotin-Fukuhara M."/>
            <person name="Brown A."/>
            <person name="Brown A.J.P."/>
            <person name="Buhler J.-M."/>
            <person name="Carcano C."/>
            <person name="Carignani G."/>
            <person name="Cederberg H."/>
            <person name="Chanet R."/>
            <person name="Contreras R."/>
            <person name="Crouzet M."/>
            <person name="Daignan-Fornier B."/>
            <person name="Defoor E."/>
            <person name="Delgado M.D."/>
            <person name="Demolder J."/>
            <person name="Doira C."/>
            <person name="Dubois E."/>
            <person name="Dujon B."/>
            <person name="Duesterhoeft A."/>
            <person name="Erdmann D."/>
            <person name="Esteban M."/>
            <person name="Fabre F."/>
            <person name="Fairhead C."/>
            <person name="Faye G."/>
            <person name="Feldmann H."/>
            <person name="Fiers W."/>
            <person name="Francingues-Gaillard M.-C."/>
            <person name="Franco L."/>
            <person name="Frontali L."/>
            <person name="Fukuhara H."/>
            <person name="Fuller L.J."/>
            <person name="Galland P."/>
            <person name="Gent M.E."/>
            <person name="Gigot D."/>
            <person name="Gilliquet V."/>
            <person name="Glansdorff N."/>
            <person name="Goffeau A."/>
            <person name="Grenson M."/>
            <person name="Grisanti P."/>
            <person name="Grivell L.A."/>
            <person name="de Haan M."/>
            <person name="Haasemann M."/>
            <person name="Hatat D."/>
            <person name="Hoenicka J."/>
            <person name="Hegemann J.H."/>
            <person name="Herbert C.J."/>
            <person name="Hilger F."/>
            <person name="Hohmann S."/>
            <person name="Hollenberg C.P."/>
            <person name="Huse K."/>
            <person name="Iborra F."/>
            <person name="Indge K.J."/>
            <person name="Isono K."/>
            <person name="Jacq C."/>
            <person name="Jacquet M."/>
            <person name="James C.M."/>
            <person name="Jauniaux J.-C."/>
            <person name="Jia Y."/>
            <person name="Jimenez A."/>
            <person name="Kelly A."/>
            <person name="Kleinhans U."/>
            <person name="Kreisl P."/>
            <person name="Lanfranchi G."/>
            <person name="Lewis C."/>
            <person name="van der Linden C.G."/>
            <person name="Lucchini G."/>
            <person name="Lutzenkirchen K."/>
            <person name="Maat M.J."/>
            <person name="Mallet L."/>
            <person name="Mannhaupt G."/>
            <person name="Martegani E."/>
            <person name="Mathieu A."/>
            <person name="Maurer C.T.C."/>
            <person name="McConnell D."/>
            <person name="McKee R.A."/>
            <person name="Messenguy F."/>
            <person name="Mewes H.-W."/>
            <person name="Molemans F."/>
            <person name="Montague M.A."/>
            <person name="Muzi Falconi M."/>
            <person name="Navas L."/>
            <person name="Newlon C.S."/>
            <person name="Noone D."/>
            <person name="Pallier C."/>
            <person name="Panzeri L."/>
            <person name="Pearson B.M."/>
            <person name="Perea J."/>
            <person name="Philippsen P."/>
            <person name="Pierard A."/>
            <person name="Planta R.J."/>
            <person name="Plevani P."/>
            <person name="Poetsch B."/>
            <person name="Pohl F.M."/>
            <person name="Purnelle B."/>
            <person name="Ramezani Rad M."/>
            <person name="Rasmussen S.W."/>
            <person name="Raynal A."/>
            <person name="Remacha M.A."/>
            <person name="Richterich P."/>
            <person name="Roberts A.B."/>
            <person name="Rodriguez F."/>
            <person name="Sanz E."/>
            <person name="Schaaff-Gerstenschlaeger I."/>
            <person name="Scherens B."/>
            <person name="Schweitzer B."/>
            <person name="Shu Y."/>
            <person name="Skala J."/>
            <person name="Slonimski P.P."/>
            <person name="Sor F."/>
            <person name="Soustelle C."/>
            <person name="Spiegelberg R."/>
            <person name="Stateva L.I."/>
            <person name="Steensma H.Y."/>
            <person name="Steiner S."/>
            <person name="Thierry A."/>
            <person name="Thireos G."/>
            <person name="Tzermia M."/>
            <person name="Urrestarazu L.A."/>
            <person name="Valle G."/>
            <person name="Vetter I."/>
            <person name="van Vliet-Reedijk J.C."/>
            <person name="Voet M."/>
            <person name="Volckaert G."/>
            <person name="Vreken P."/>
            <person name="Wang H."/>
            <person name="Warmington J.R."/>
            <person name="von Wettstein D."/>
            <person name="Wicksteed B.L."/>
            <person name="Wilson C."/>
            <person name="Wurst H."/>
            <person name="Xu G."/>
            <person name="Yoshikawa A."/>
            <person name="Zimmermann F.K."/>
            <person name="Sgouros J.G."/>
        </authorList>
    </citation>
    <scope>NUCLEOTIDE SEQUENCE [LARGE SCALE GENOMIC DNA]</scope>
    <source>
        <strain>ATCC 204508 / S288c</strain>
    </source>
</reference>
<reference key="3">
    <citation type="submission" date="2001-06" db="EMBL/GenBank/DDBJ databases">
        <authorList>
            <person name="Valles G."/>
            <person name="Volckaerts G."/>
        </authorList>
    </citation>
    <scope>SEQUENCE REVISION</scope>
</reference>
<reference key="4">
    <citation type="journal article" date="2014" name="G3 (Bethesda)">
        <title>The reference genome sequence of Saccharomyces cerevisiae: Then and now.</title>
        <authorList>
            <person name="Engel S.R."/>
            <person name="Dietrich F.S."/>
            <person name="Fisk D.G."/>
            <person name="Binkley G."/>
            <person name="Balakrishnan R."/>
            <person name="Costanzo M.C."/>
            <person name="Dwight S.S."/>
            <person name="Hitz B.C."/>
            <person name="Karra K."/>
            <person name="Nash R.S."/>
            <person name="Weng S."/>
            <person name="Wong E.D."/>
            <person name="Lloyd P."/>
            <person name="Skrzypek M.S."/>
            <person name="Miyasato S.R."/>
            <person name="Simison M."/>
            <person name="Cherry J.M."/>
        </authorList>
    </citation>
    <scope>GENOME REANNOTATION</scope>
    <source>
        <strain>ATCC 204508 / S288c</strain>
    </source>
</reference>
<reference key="5">
    <citation type="journal article" date="1991" name="Yeast">
        <title>The complete sequence of the unit YCR59, situated between CRY1 and MAT, reveals two long open reading frames, which cover 91% of the 10.1 kb segment.</title>
        <authorList>
            <person name="Jia Y."/>
            <person name="Slonimski P.P."/>
            <person name="Herbert C.J."/>
        </authorList>
    </citation>
    <scope>NUCLEOTIDE SEQUENCE [GENOMIC DNA] OF 335-2167</scope>
</reference>
<reference key="6">
    <citation type="journal article" date="1991" name="Yeast">
        <title>The complete sequence of a 7.5 kb region of chromosome III from Saccharomyces cerevisiae that lies between CRY1 and MAT.</title>
        <authorList>
            <person name="Wicksteed B.L."/>
            <person name="Roberts A.B."/>
            <person name="Sagliocco F.A."/>
            <person name="Brown A.J.P."/>
        </authorList>
    </citation>
    <scope>NUCLEOTIDE SEQUENCE [GENOMIC DNA] OF 1760-2167</scope>
</reference>
<reference key="7">
    <citation type="journal article" date="2004" name="Traffic">
        <title>Bph1p, the Saccharomyces cerevisiae homologue of CHS1/beige, functions in cell wall formation and protein sorting.</title>
        <authorList>
            <person name="Shiflett S.L."/>
            <person name="Vaughn M.B."/>
            <person name="Huynh D."/>
            <person name="Kaplan J."/>
            <person name="McVey Ward D."/>
        </authorList>
    </citation>
    <scope>FUNCTION</scope>
    <scope>SUBCELLULAR LOCATION</scope>
</reference>
<reference key="8">
    <citation type="journal article" date="2012" name="Proteomics">
        <title>Sites of ubiquitin attachment in Saccharomyces cerevisiae.</title>
        <authorList>
            <person name="Starita L.M."/>
            <person name="Lo R.S."/>
            <person name="Eng J.K."/>
            <person name="von Haller P.D."/>
            <person name="Fields S."/>
        </authorList>
    </citation>
    <scope>UBIQUITINATION [LARGE SCALE ANALYSIS] AT LYS-1667</scope>
    <scope>IDENTIFICATION BY MASS SPECTROMETRY [LARGE SCALE ANALYSIS]</scope>
</reference>